<comment type="subcellular location">
    <subcellularLocation>
        <location evidence="1">Periplasm</location>
    </subcellularLocation>
</comment>
<comment type="similarity">
    <text evidence="3">Belongs to the TolB family.</text>
</comment>
<comment type="sequence caution" evidence="3">
    <conflict type="erroneous initiation">
        <sequence resource="EMBL-CDS" id="BAE80810"/>
    </conflict>
</comment>
<sequence>MLRRLFVSTFLIFGMVSLYAKDLEVSVRSENTLLPIHVELNIGPNDAKQTKYLRSLCSIFVKDLALGDRLQPLLVKSGEISAPFSIVISSHYPELVFTLSRGTHNPRPFHSLVLTEDIAINRQKIHEVADKIHYALTRVPGISSGKIVFSLSKNPHDGELKQGELWSVDYDGENLRALTQENSLSITPNWLNIGSNNPYFYVSYKFGIPKIFLGSLENTSGKKVLNLQGNQFMPVFSPRKKQLAFISDAYGNPDLFLQGFSPSQGAMGKPRRVLNESFGTQGNPSFSPDGSKLVFVSNKDGRPRLYIIQVDPEIQTPRLLTKKYRNSSCPSWSPDGKKIAFCSVIKGVRQICLYDLSTGKDYQLTTTPIDKEGPSWAIDSHHLVYSAGNSGESELYLLSLITQKTNKIVIGLGEKRFPSWGGFPNNQ</sequence>
<reference key="1">
    <citation type="journal article" date="2006" name="DNA Res.">
        <title>Genome sequence of the cat pathogen, Chlamydophila felis.</title>
        <authorList>
            <person name="Azuma Y."/>
            <person name="Hirakawa H."/>
            <person name="Yamashita A."/>
            <person name="Cai Y."/>
            <person name="Rahman M.A."/>
            <person name="Suzuki H."/>
            <person name="Mitaku S."/>
            <person name="Toh H."/>
            <person name="Goto S."/>
            <person name="Murakami T."/>
            <person name="Sugi K."/>
            <person name="Hayashi H."/>
            <person name="Fukushi H."/>
            <person name="Hattori M."/>
            <person name="Kuhara S."/>
            <person name="Shirai M."/>
        </authorList>
    </citation>
    <scope>NUCLEOTIDE SEQUENCE [LARGE SCALE GENOMIC DNA]</scope>
    <source>
        <strain>Fe/C-56</strain>
    </source>
</reference>
<accession>Q256H8</accession>
<proteinExistence type="inferred from homology"/>
<evidence type="ECO:0000250" key="1">
    <source>
        <dbReference type="UniProtKB" id="P0A855"/>
    </source>
</evidence>
<evidence type="ECO:0000255" key="2"/>
<evidence type="ECO:0000305" key="3"/>
<protein>
    <recommendedName>
        <fullName evidence="3">Protein TolB homolog</fullName>
    </recommendedName>
</protein>
<dbReference type="EMBL" id="AP006861">
    <property type="protein sequence ID" value="BAE80810.1"/>
    <property type="status" value="ALT_INIT"/>
    <property type="molecule type" value="Genomic_DNA"/>
</dbReference>
<dbReference type="RefSeq" id="WP_041468046.1">
    <property type="nucleotide sequence ID" value="NC_007899.1"/>
</dbReference>
<dbReference type="SMR" id="Q256H8"/>
<dbReference type="STRING" id="264202.CF0038"/>
<dbReference type="KEGG" id="cfe:CF0038"/>
<dbReference type="eggNOG" id="COG0823">
    <property type="taxonomic scope" value="Bacteria"/>
</dbReference>
<dbReference type="HOGENOM" id="CLU_635688_0_0_0"/>
<dbReference type="OrthoDB" id="108903at2"/>
<dbReference type="Proteomes" id="UP000001260">
    <property type="component" value="Chromosome"/>
</dbReference>
<dbReference type="GO" id="GO:0042597">
    <property type="term" value="C:periplasmic space"/>
    <property type="evidence" value="ECO:0007669"/>
    <property type="project" value="UniProtKB-SubCell"/>
</dbReference>
<dbReference type="Gene3D" id="2.120.10.30">
    <property type="entry name" value="TolB, C-terminal domain"/>
    <property type="match status" value="1"/>
</dbReference>
<dbReference type="InterPro" id="IPR011042">
    <property type="entry name" value="6-blade_b-propeller_TolB-like"/>
</dbReference>
<dbReference type="InterPro" id="IPR011659">
    <property type="entry name" value="PD40"/>
</dbReference>
<dbReference type="NCBIfam" id="NF002183">
    <property type="entry name" value="PRK01029.1"/>
    <property type="match status" value="1"/>
</dbReference>
<dbReference type="PANTHER" id="PTHR36842:SF1">
    <property type="entry name" value="PROTEIN TOLB"/>
    <property type="match status" value="1"/>
</dbReference>
<dbReference type="PANTHER" id="PTHR36842">
    <property type="entry name" value="PROTEIN TOLB HOMOLOG"/>
    <property type="match status" value="1"/>
</dbReference>
<dbReference type="Pfam" id="PF07676">
    <property type="entry name" value="PD40"/>
    <property type="match status" value="3"/>
</dbReference>
<dbReference type="SUPFAM" id="SSF69304">
    <property type="entry name" value="Tricorn protease N-terminal domain"/>
    <property type="match status" value="1"/>
</dbReference>
<organism>
    <name type="scientific">Chlamydia felis (strain Fe/C-56)</name>
    <name type="common">Chlamydophila felis</name>
    <dbReference type="NCBI Taxonomy" id="264202"/>
    <lineage>
        <taxon>Bacteria</taxon>
        <taxon>Pseudomonadati</taxon>
        <taxon>Chlamydiota</taxon>
        <taxon>Chlamydiia</taxon>
        <taxon>Chlamydiales</taxon>
        <taxon>Chlamydiaceae</taxon>
        <taxon>Chlamydia/Chlamydophila group</taxon>
        <taxon>Chlamydia</taxon>
    </lineage>
</organism>
<keyword id="KW-0574">Periplasm</keyword>
<keyword id="KW-0732">Signal</keyword>
<name>TOLB_CHLFF</name>
<gene>
    <name type="primary">tolB</name>
    <name type="ordered locus">CF0038</name>
</gene>
<feature type="signal peptide" evidence="2">
    <location>
        <begin position="1"/>
        <end position="20"/>
    </location>
</feature>
<feature type="chain" id="PRO_0000259041" description="Protein TolB homolog" evidence="2">
    <location>
        <begin position="21"/>
        <end position="427"/>
    </location>
</feature>